<protein>
    <recommendedName>
        <fullName evidence="3">Protein CADMIUM TOLERANCE 5</fullName>
        <shortName evidence="3">Cd tolerant 5</shortName>
        <shortName evidence="3">OsCDT5</shortName>
    </recommendedName>
</protein>
<sequence>MYNPPSAQEMTYKDHVQRRHEEKGCLYACLFTLCCCFCCYETCECCLETLCCCC</sequence>
<organism>
    <name type="scientific">Oryza sativa subsp. indica</name>
    <name type="common">Rice</name>
    <dbReference type="NCBI Taxonomy" id="39946"/>
    <lineage>
        <taxon>Eukaryota</taxon>
        <taxon>Viridiplantae</taxon>
        <taxon>Streptophyta</taxon>
        <taxon>Embryophyta</taxon>
        <taxon>Tracheophyta</taxon>
        <taxon>Spermatophyta</taxon>
        <taxon>Magnoliopsida</taxon>
        <taxon>Liliopsida</taxon>
        <taxon>Poales</taxon>
        <taxon>Poaceae</taxon>
        <taxon>BOP clade</taxon>
        <taxon>Oryzoideae</taxon>
        <taxon>Oryzeae</taxon>
        <taxon>Oryzinae</taxon>
        <taxon>Oryza</taxon>
        <taxon>Oryza sativa</taxon>
    </lineage>
</organism>
<gene>
    <name evidence="3" type="primary">CDT5</name>
    <name evidence="4" type="ORF">OsI_18665</name>
</gene>
<comment type="function">
    <text evidence="1">Confers resistance to heavy metal ions (e.g. cadmium (CdCl(2)) and copper (CuCl(2))) by chelating them at the plasma membrane of root cells, thus stopping their entry and reducing their accumulation.</text>
</comment>
<comment type="subcellular location">
    <subcellularLocation>
        <location evidence="1">Cell membrane</location>
        <topology evidence="2">Single-pass membrane protein</topology>
    </subcellularLocation>
    <subcellularLocation>
        <location evidence="1">Secreted</location>
        <location evidence="1">Cell wall</location>
    </subcellularLocation>
</comment>
<comment type="similarity">
    <text evidence="3">Belongs to the CYSTM1 family.</text>
</comment>
<feature type="chain" id="PRO_0000454820" description="Protein CADMIUM TOLERANCE 5">
    <location>
        <begin position="1"/>
        <end position="54"/>
    </location>
</feature>
<feature type="transmembrane region" description="Helical" evidence="2">
    <location>
        <begin position="24"/>
        <end position="40"/>
    </location>
</feature>
<evidence type="ECO:0000250" key="1">
    <source>
        <dbReference type="UniProtKB" id="Q5VSB5"/>
    </source>
</evidence>
<evidence type="ECO:0000255" key="2"/>
<evidence type="ECO:0000305" key="3"/>
<evidence type="ECO:0000312" key="4">
    <source>
        <dbReference type="EMBL" id="EEC78619.1"/>
    </source>
</evidence>
<keyword id="KW-1003">Cell membrane</keyword>
<keyword id="KW-0134">Cell wall</keyword>
<keyword id="KW-0472">Membrane</keyword>
<keyword id="KW-0479">Metal-binding</keyword>
<keyword id="KW-1185">Reference proteome</keyword>
<keyword id="KW-0964">Secreted</keyword>
<keyword id="KW-0346">Stress response</keyword>
<keyword id="KW-0812">Transmembrane</keyword>
<keyword id="KW-1133">Transmembrane helix</keyword>
<dbReference type="EMBL" id="CM000130">
    <property type="protein sequence ID" value="EEC78619.1"/>
    <property type="molecule type" value="Genomic_DNA"/>
</dbReference>
<dbReference type="STRING" id="39946.B8AYM8"/>
<dbReference type="EnsemblPlants" id="BGIOSGA018704-TA">
    <property type="protein sequence ID" value="BGIOSGA018704-PA"/>
    <property type="gene ID" value="BGIOSGA018704"/>
</dbReference>
<dbReference type="Gramene" id="BGIOSGA018704-TA">
    <property type="protein sequence ID" value="BGIOSGA018704-PA"/>
    <property type="gene ID" value="BGIOSGA018704"/>
</dbReference>
<dbReference type="HOGENOM" id="CLU_156676_2_0_1"/>
<dbReference type="OMA" id="CLDMLCC"/>
<dbReference type="Proteomes" id="UP000007015">
    <property type="component" value="Chromosome 5"/>
</dbReference>
<dbReference type="GO" id="GO:0005576">
    <property type="term" value="C:extracellular region"/>
    <property type="evidence" value="ECO:0007669"/>
    <property type="project" value="UniProtKB-KW"/>
</dbReference>
<dbReference type="GO" id="GO:0009505">
    <property type="term" value="C:plant-type cell wall"/>
    <property type="evidence" value="ECO:0000250"/>
    <property type="project" value="UniProtKB"/>
</dbReference>
<dbReference type="GO" id="GO:0005886">
    <property type="term" value="C:plasma membrane"/>
    <property type="evidence" value="ECO:0000250"/>
    <property type="project" value="UniProtKB"/>
</dbReference>
<dbReference type="GO" id="GO:0046872">
    <property type="term" value="F:metal ion binding"/>
    <property type="evidence" value="ECO:0000250"/>
    <property type="project" value="UniProtKB"/>
</dbReference>
<dbReference type="GO" id="GO:0140487">
    <property type="term" value="F:metal ion sequestering activity"/>
    <property type="evidence" value="ECO:0000250"/>
    <property type="project" value="UniProtKB"/>
</dbReference>
<dbReference type="GO" id="GO:1990748">
    <property type="term" value="P:cellular detoxification"/>
    <property type="evidence" value="ECO:0000250"/>
    <property type="project" value="UniProtKB"/>
</dbReference>
<dbReference type="GO" id="GO:0071585">
    <property type="term" value="P:detoxification of cadmium ion"/>
    <property type="evidence" value="ECO:0000250"/>
    <property type="project" value="UniProtKB"/>
</dbReference>
<dbReference type="GO" id="GO:0010273">
    <property type="term" value="P:detoxification of copper ion"/>
    <property type="evidence" value="ECO:0000250"/>
    <property type="project" value="UniProtKB"/>
</dbReference>
<dbReference type="InterPro" id="IPR051671">
    <property type="entry name" value="CYSTM1_HM_Tolerance"/>
</dbReference>
<dbReference type="InterPro" id="IPR028144">
    <property type="entry name" value="CYSTM_dom"/>
</dbReference>
<dbReference type="PANTHER" id="PTHR35470">
    <property type="entry name" value="CADMIUM TOLERANT 3"/>
    <property type="match status" value="1"/>
</dbReference>
<dbReference type="PANTHER" id="PTHR35470:SF6">
    <property type="entry name" value="PROTEIN CYSTEINE-RICH TRANSMEMBRANE MODULE 2"/>
    <property type="match status" value="1"/>
</dbReference>
<dbReference type="Pfam" id="PF12734">
    <property type="entry name" value="CYSTM"/>
    <property type="match status" value="1"/>
</dbReference>
<accession>B8AYM8</accession>
<proteinExistence type="inferred from homology"/>
<reference key="1">
    <citation type="journal article" date="2005" name="PLoS Biol.">
        <title>The genomes of Oryza sativa: a history of duplications.</title>
        <authorList>
            <person name="Yu J."/>
            <person name="Wang J."/>
            <person name="Lin W."/>
            <person name="Li S."/>
            <person name="Li H."/>
            <person name="Zhou J."/>
            <person name="Ni P."/>
            <person name="Dong W."/>
            <person name="Hu S."/>
            <person name="Zeng C."/>
            <person name="Zhang J."/>
            <person name="Zhang Y."/>
            <person name="Li R."/>
            <person name="Xu Z."/>
            <person name="Li S."/>
            <person name="Li X."/>
            <person name="Zheng H."/>
            <person name="Cong L."/>
            <person name="Lin L."/>
            <person name="Yin J."/>
            <person name="Geng J."/>
            <person name="Li G."/>
            <person name="Shi J."/>
            <person name="Liu J."/>
            <person name="Lv H."/>
            <person name="Li J."/>
            <person name="Wang J."/>
            <person name="Deng Y."/>
            <person name="Ran L."/>
            <person name="Shi X."/>
            <person name="Wang X."/>
            <person name="Wu Q."/>
            <person name="Li C."/>
            <person name="Ren X."/>
            <person name="Wang J."/>
            <person name="Wang X."/>
            <person name="Li D."/>
            <person name="Liu D."/>
            <person name="Zhang X."/>
            <person name="Ji Z."/>
            <person name="Zhao W."/>
            <person name="Sun Y."/>
            <person name="Zhang Z."/>
            <person name="Bao J."/>
            <person name="Han Y."/>
            <person name="Dong L."/>
            <person name="Ji J."/>
            <person name="Chen P."/>
            <person name="Wu S."/>
            <person name="Liu J."/>
            <person name="Xiao Y."/>
            <person name="Bu D."/>
            <person name="Tan J."/>
            <person name="Yang L."/>
            <person name="Ye C."/>
            <person name="Zhang J."/>
            <person name="Xu J."/>
            <person name="Zhou Y."/>
            <person name="Yu Y."/>
            <person name="Zhang B."/>
            <person name="Zhuang S."/>
            <person name="Wei H."/>
            <person name="Liu B."/>
            <person name="Lei M."/>
            <person name="Yu H."/>
            <person name="Li Y."/>
            <person name="Xu H."/>
            <person name="Wei S."/>
            <person name="He X."/>
            <person name="Fang L."/>
            <person name="Zhang Z."/>
            <person name="Zhang Y."/>
            <person name="Huang X."/>
            <person name="Su Z."/>
            <person name="Tong W."/>
            <person name="Li J."/>
            <person name="Tong Z."/>
            <person name="Li S."/>
            <person name="Ye J."/>
            <person name="Wang L."/>
            <person name="Fang L."/>
            <person name="Lei T."/>
            <person name="Chen C.-S."/>
            <person name="Chen H.-C."/>
            <person name="Xu Z."/>
            <person name="Li H."/>
            <person name="Huang H."/>
            <person name="Zhang F."/>
            <person name="Xu H."/>
            <person name="Li N."/>
            <person name="Zhao C."/>
            <person name="Li S."/>
            <person name="Dong L."/>
            <person name="Huang Y."/>
            <person name="Li L."/>
            <person name="Xi Y."/>
            <person name="Qi Q."/>
            <person name="Li W."/>
            <person name="Zhang B."/>
            <person name="Hu W."/>
            <person name="Zhang Y."/>
            <person name="Tian X."/>
            <person name="Jiao Y."/>
            <person name="Liang X."/>
            <person name="Jin J."/>
            <person name="Gao L."/>
            <person name="Zheng W."/>
            <person name="Hao B."/>
            <person name="Liu S.-M."/>
            <person name="Wang W."/>
            <person name="Yuan L."/>
            <person name="Cao M."/>
            <person name="McDermott J."/>
            <person name="Samudrala R."/>
            <person name="Wang J."/>
            <person name="Wong G.K.-S."/>
            <person name="Yang H."/>
        </authorList>
    </citation>
    <scope>NUCLEOTIDE SEQUENCE [LARGE SCALE GENOMIC DNA]</scope>
    <source>
        <strain>cv. 93-11</strain>
    </source>
</reference>
<name>CDT5_ORYSI</name>